<name>SYA_THEFY</name>
<gene>
    <name evidence="1" type="primary">alaS</name>
    <name type="ordered locus">Tfu_2070</name>
</gene>
<keyword id="KW-0030">Aminoacyl-tRNA synthetase</keyword>
<keyword id="KW-0067">ATP-binding</keyword>
<keyword id="KW-0963">Cytoplasm</keyword>
<keyword id="KW-0436">Ligase</keyword>
<keyword id="KW-0479">Metal-binding</keyword>
<keyword id="KW-0547">Nucleotide-binding</keyword>
<keyword id="KW-0648">Protein biosynthesis</keyword>
<keyword id="KW-0694">RNA-binding</keyword>
<keyword id="KW-0820">tRNA-binding</keyword>
<keyword id="KW-0862">Zinc</keyword>
<accession>Q47N66</accession>
<evidence type="ECO:0000255" key="1">
    <source>
        <dbReference type="HAMAP-Rule" id="MF_00036"/>
    </source>
</evidence>
<comment type="function">
    <text evidence="1">Catalyzes the attachment of alanine to tRNA(Ala) in a two-step reaction: alanine is first activated by ATP to form Ala-AMP and then transferred to the acceptor end of tRNA(Ala). Also edits incorrectly charged Ser-tRNA(Ala) and Gly-tRNA(Ala) via its editing domain.</text>
</comment>
<comment type="catalytic activity">
    <reaction evidence="1">
        <text>tRNA(Ala) + L-alanine + ATP = L-alanyl-tRNA(Ala) + AMP + diphosphate</text>
        <dbReference type="Rhea" id="RHEA:12540"/>
        <dbReference type="Rhea" id="RHEA-COMP:9657"/>
        <dbReference type="Rhea" id="RHEA-COMP:9923"/>
        <dbReference type="ChEBI" id="CHEBI:30616"/>
        <dbReference type="ChEBI" id="CHEBI:33019"/>
        <dbReference type="ChEBI" id="CHEBI:57972"/>
        <dbReference type="ChEBI" id="CHEBI:78442"/>
        <dbReference type="ChEBI" id="CHEBI:78497"/>
        <dbReference type="ChEBI" id="CHEBI:456215"/>
        <dbReference type="EC" id="6.1.1.7"/>
    </reaction>
</comment>
<comment type="cofactor">
    <cofactor evidence="1">
        <name>Zn(2+)</name>
        <dbReference type="ChEBI" id="CHEBI:29105"/>
    </cofactor>
    <text evidence="1">Binds 1 zinc ion per subunit.</text>
</comment>
<comment type="subcellular location">
    <subcellularLocation>
        <location evidence="1">Cytoplasm</location>
    </subcellularLocation>
</comment>
<comment type="domain">
    <text evidence="1">Consists of three domains; the N-terminal catalytic domain, the editing domain and the C-terminal C-Ala domain. The editing domain removes incorrectly charged amino acids, while the C-Ala domain, along with tRNA(Ala), serves as a bridge to cooperatively bring together the editing and aminoacylation centers thus stimulating deacylation of misacylated tRNAs.</text>
</comment>
<comment type="similarity">
    <text evidence="1">Belongs to the class-II aminoacyl-tRNA synthetase family.</text>
</comment>
<protein>
    <recommendedName>
        <fullName evidence="1">Alanine--tRNA ligase</fullName>
        <ecNumber evidence="1">6.1.1.7</ecNumber>
    </recommendedName>
    <alternativeName>
        <fullName evidence="1">Alanyl-tRNA synthetase</fullName>
        <shortName evidence="1">AlaRS</shortName>
    </alternativeName>
</protein>
<sequence length="889" mass="96752">MKSAEIARRFLAFFEKNGHTVVPSASLIAEDPTLLLVNAGMVPFKPYFLGQRTPPYPRATSVQKCVRTIDIDEVGKTTRHASFFQMLGNFSFGDYFKEKAIPLAWELLTTSVADGGFGFDPERLWVTVYLDDDEAATIWREKVGLPEERIQRRGKADNFWSMGVPGPCGPCSEIYFDRGPEYGAEGGPVADEDRYLEVWNLVFMQFERGEGSGKEDYPILGELPSKNIDTGMGLERMAAILQGVDNIYETDTLGRILRRAAELTGTTYGENERADVSLRVIADHVRTATMLVADGVRPGNEKRGYVLRRILRRSIRNLRLLSGDESFHMHDLTAVAIDAMGDQYPELRADADKIHSIIDAEEKNFADTLRAGTTLFNRAVRRTKETGGTVFSGADAFQLHDTYGFPIDLTLEMAAEHGLKVDEETFHQLMQRQRETAKRDAQAKKLGNADISVYGNLLETGGPTEFLGYTDSESEARVLGIIVNGESTGAARKGDQVELVLDRTPFYAESGGQLADKGTITVDGRGVVDVEDVQKPIQGLFVHRGTVREGEVVVDDTVHAAIDTGRRASVSRSHSATHLIHSALRNTLGPSAGQAGSENQPGRLRFDFTSDKPLDATEIAQVEEEVNEVLARNIEVQYLETTLDEALRMGALAMFGEKYGNRVRVVDMTEYSRELCGGTHVAATGQLGLVKVLGESSVGSGVRRVEALVGLDALRRVSTESALVGQLSEQLKAPREELPQRIDSLVSRLRAAEKEIERLRAAQVLQAAGKLAESARDHGNSRVVTHRVEDGTTADDMRKLALDVRGRLGEDRPAVVAIAGVPSDRPVVVVAINKEAQQAGLKAGELVGVAARALGGGGGGRPDIAQGGGSDVTAIDTALRLVEQRVAGS</sequence>
<organism>
    <name type="scientific">Thermobifida fusca (strain YX)</name>
    <dbReference type="NCBI Taxonomy" id="269800"/>
    <lineage>
        <taxon>Bacteria</taxon>
        <taxon>Bacillati</taxon>
        <taxon>Actinomycetota</taxon>
        <taxon>Actinomycetes</taxon>
        <taxon>Streptosporangiales</taxon>
        <taxon>Nocardiopsidaceae</taxon>
        <taxon>Thermobifida</taxon>
    </lineage>
</organism>
<proteinExistence type="inferred from homology"/>
<feature type="chain" id="PRO_0000075231" description="Alanine--tRNA ligase">
    <location>
        <begin position="1"/>
        <end position="889"/>
    </location>
</feature>
<feature type="binding site" evidence="1">
    <location>
        <position position="574"/>
    </location>
    <ligand>
        <name>Zn(2+)</name>
        <dbReference type="ChEBI" id="CHEBI:29105"/>
    </ligand>
</feature>
<feature type="binding site" evidence="1">
    <location>
        <position position="578"/>
    </location>
    <ligand>
        <name>Zn(2+)</name>
        <dbReference type="ChEBI" id="CHEBI:29105"/>
    </ligand>
</feature>
<feature type="binding site" evidence="1">
    <location>
        <position position="676"/>
    </location>
    <ligand>
        <name>Zn(2+)</name>
        <dbReference type="ChEBI" id="CHEBI:29105"/>
    </ligand>
</feature>
<feature type="binding site" evidence="1">
    <location>
        <position position="680"/>
    </location>
    <ligand>
        <name>Zn(2+)</name>
        <dbReference type="ChEBI" id="CHEBI:29105"/>
    </ligand>
</feature>
<reference key="1">
    <citation type="journal article" date="2007" name="J. Bacteriol.">
        <title>Genome sequence and analysis of the soil cellulolytic actinomycete Thermobifida fusca YX.</title>
        <authorList>
            <person name="Lykidis A."/>
            <person name="Mavromatis K."/>
            <person name="Ivanova N."/>
            <person name="Anderson I."/>
            <person name="Land M."/>
            <person name="DiBartolo G."/>
            <person name="Martinez M."/>
            <person name="Lapidus A."/>
            <person name="Lucas S."/>
            <person name="Copeland A."/>
            <person name="Richardson P."/>
            <person name="Wilson D.B."/>
            <person name="Kyrpides N."/>
        </authorList>
    </citation>
    <scope>NUCLEOTIDE SEQUENCE [LARGE SCALE GENOMIC DNA]</scope>
    <source>
        <strain>YX</strain>
    </source>
</reference>
<dbReference type="EC" id="6.1.1.7" evidence="1"/>
<dbReference type="EMBL" id="CP000088">
    <property type="protein sequence ID" value="AAZ56103.1"/>
    <property type="molecule type" value="Genomic_DNA"/>
</dbReference>
<dbReference type="RefSeq" id="WP_011292493.1">
    <property type="nucleotide sequence ID" value="NC_007333.1"/>
</dbReference>
<dbReference type="SMR" id="Q47N66"/>
<dbReference type="STRING" id="269800.Tfu_2070"/>
<dbReference type="KEGG" id="tfu:Tfu_2070"/>
<dbReference type="eggNOG" id="COG0013">
    <property type="taxonomic scope" value="Bacteria"/>
</dbReference>
<dbReference type="HOGENOM" id="CLU_004485_1_1_11"/>
<dbReference type="OrthoDB" id="9803884at2"/>
<dbReference type="GO" id="GO:0005829">
    <property type="term" value="C:cytosol"/>
    <property type="evidence" value="ECO:0007669"/>
    <property type="project" value="TreeGrafter"/>
</dbReference>
<dbReference type="GO" id="GO:0004813">
    <property type="term" value="F:alanine-tRNA ligase activity"/>
    <property type="evidence" value="ECO:0007669"/>
    <property type="project" value="UniProtKB-UniRule"/>
</dbReference>
<dbReference type="GO" id="GO:0002161">
    <property type="term" value="F:aminoacyl-tRNA deacylase activity"/>
    <property type="evidence" value="ECO:0007669"/>
    <property type="project" value="TreeGrafter"/>
</dbReference>
<dbReference type="GO" id="GO:0005524">
    <property type="term" value="F:ATP binding"/>
    <property type="evidence" value="ECO:0007669"/>
    <property type="project" value="UniProtKB-UniRule"/>
</dbReference>
<dbReference type="GO" id="GO:0000049">
    <property type="term" value="F:tRNA binding"/>
    <property type="evidence" value="ECO:0007669"/>
    <property type="project" value="UniProtKB-KW"/>
</dbReference>
<dbReference type="GO" id="GO:0008270">
    <property type="term" value="F:zinc ion binding"/>
    <property type="evidence" value="ECO:0007669"/>
    <property type="project" value="UniProtKB-UniRule"/>
</dbReference>
<dbReference type="GO" id="GO:0006419">
    <property type="term" value="P:alanyl-tRNA aminoacylation"/>
    <property type="evidence" value="ECO:0007669"/>
    <property type="project" value="UniProtKB-UniRule"/>
</dbReference>
<dbReference type="CDD" id="cd00673">
    <property type="entry name" value="AlaRS_core"/>
    <property type="match status" value="1"/>
</dbReference>
<dbReference type="FunFam" id="2.40.30.130:FF:000001">
    <property type="entry name" value="Alanine--tRNA ligase"/>
    <property type="match status" value="1"/>
</dbReference>
<dbReference type="FunFam" id="3.10.310.40:FF:000001">
    <property type="entry name" value="Alanine--tRNA ligase"/>
    <property type="match status" value="1"/>
</dbReference>
<dbReference type="FunFam" id="3.30.54.20:FF:000001">
    <property type="entry name" value="Alanine--tRNA ligase"/>
    <property type="match status" value="1"/>
</dbReference>
<dbReference type="FunFam" id="3.30.930.10:FF:000004">
    <property type="entry name" value="Alanine--tRNA ligase"/>
    <property type="match status" value="1"/>
</dbReference>
<dbReference type="FunFam" id="3.30.980.10:FF:000004">
    <property type="entry name" value="Alanine--tRNA ligase, cytoplasmic"/>
    <property type="match status" value="1"/>
</dbReference>
<dbReference type="Gene3D" id="2.40.30.130">
    <property type="match status" value="1"/>
</dbReference>
<dbReference type="Gene3D" id="3.10.310.40">
    <property type="match status" value="1"/>
</dbReference>
<dbReference type="Gene3D" id="3.30.54.20">
    <property type="match status" value="1"/>
</dbReference>
<dbReference type="Gene3D" id="6.10.250.550">
    <property type="match status" value="1"/>
</dbReference>
<dbReference type="Gene3D" id="3.30.930.10">
    <property type="entry name" value="Bira Bifunctional Protein, Domain 2"/>
    <property type="match status" value="1"/>
</dbReference>
<dbReference type="Gene3D" id="3.30.980.10">
    <property type="entry name" value="Threonyl-trna Synthetase, Chain A, domain 2"/>
    <property type="match status" value="1"/>
</dbReference>
<dbReference type="HAMAP" id="MF_00036_B">
    <property type="entry name" value="Ala_tRNA_synth_B"/>
    <property type="match status" value="1"/>
</dbReference>
<dbReference type="InterPro" id="IPR045864">
    <property type="entry name" value="aa-tRNA-synth_II/BPL/LPL"/>
</dbReference>
<dbReference type="InterPro" id="IPR002318">
    <property type="entry name" value="Ala-tRNA-lgiase_IIc"/>
</dbReference>
<dbReference type="InterPro" id="IPR018162">
    <property type="entry name" value="Ala-tRNA-ligase_IIc_anticod-bd"/>
</dbReference>
<dbReference type="InterPro" id="IPR018165">
    <property type="entry name" value="Ala-tRNA-synth_IIc_core"/>
</dbReference>
<dbReference type="InterPro" id="IPR018164">
    <property type="entry name" value="Ala-tRNA-synth_IIc_N"/>
</dbReference>
<dbReference type="InterPro" id="IPR050058">
    <property type="entry name" value="Ala-tRNA_ligase"/>
</dbReference>
<dbReference type="InterPro" id="IPR023033">
    <property type="entry name" value="Ala_tRNA_ligase_euk/bac"/>
</dbReference>
<dbReference type="InterPro" id="IPR003156">
    <property type="entry name" value="DHHA1_dom"/>
</dbReference>
<dbReference type="InterPro" id="IPR018163">
    <property type="entry name" value="Thr/Ala-tRNA-synth_IIc_edit"/>
</dbReference>
<dbReference type="InterPro" id="IPR009000">
    <property type="entry name" value="Transl_B-barrel_sf"/>
</dbReference>
<dbReference type="InterPro" id="IPR012947">
    <property type="entry name" value="tRNA_SAD"/>
</dbReference>
<dbReference type="NCBIfam" id="TIGR00344">
    <property type="entry name" value="alaS"/>
    <property type="match status" value="1"/>
</dbReference>
<dbReference type="PANTHER" id="PTHR11777:SF9">
    <property type="entry name" value="ALANINE--TRNA LIGASE, CYTOPLASMIC"/>
    <property type="match status" value="1"/>
</dbReference>
<dbReference type="PANTHER" id="PTHR11777">
    <property type="entry name" value="ALANYL-TRNA SYNTHETASE"/>
    <property type="match status" value="1"/>
</dbReference>
<dbReference type="Pfam" id="PF02272">
    <property type="entry name" value="DHHA1"/>
    <property type="match status" value="1"/>
</dbReference>
<dbReference type="Pfam" id="PF01411">
    <property type="entry name" value="tRNA-synt_2c"/>
    <property type="match status" value="1"/>
</dbReference>
<dbReference type="Pfam" id="PF07973">
    <property type="entry name" value="tRNA_SAD"/>
    <property type="match status" value="1"/>
</dbReference>
<dbReference type="PRINTS" id="PR00980">
    <property type="entry name" value="TRNASYNTHALA"/>
</dbReference>
<dbReference type="SMART" id="SM00863">
    <property type="entry name" value="tRNA_SAD"/>
    <property type="match status" value="1"/>
</dbReference>
<dbReference type="SUPFAM" id="SSF55681">
    <property type="entry name" value="Class II aaRS and biotin synthetases"/>
    <property type="match status" value="1"/>
</dbReference>
<dbReference type="SUPFAM" id="SSF101353">
    <property type="entry name" value="Putative anticodon-binding domain of alanyl-tRNA synthetase (AlaRS)"/>
    <property type="match status" value="1"/>
</dbReference>
<dbReference type="SUPFAM" id="SSF55186">
    <property type="entry name" value="ThrRS/AlaRS common domain"/>
    <property type="match status" value="1"/>
</dbReference>
<dbReference type="SUPFAM" id="SSF50447">
    <property type="entry name" value="Translation proteins"/>
    <property type="match status" value="1"/>
</dbReference>
<dbReference type="PROSITE" id="PS50860">
    <property type="entry name" value="AA_TRNA_LIGASE_II_ALA"/>
    <property type="match status" value="1"/>
</dbReference>